<keyword id="KW-0021">Allosteric enzyme</keyword>
<keyword id="KW-0067">ATP-binding</keyword>
<keyword id="KW-0963">Cytoplasm</keyword>
<keyword id="KW-0324">Glycolysis</keyword>
<keyword id="KW-0418">Kinase</keyword>
<keyword id="KW-0460">Magnesium</keyword>
<keyword id="KW-0479">Metal-binding</keyword>
<keyword id="KW-0547">Nucleotide-binding</keyword>
<keyword id="KW-0808">Transferase</keyword>
<dbReference type="EC" id="2.7.1.11" evidence="1"/>
<dbReference type="EMBL" id="CP000001">
    <property type="protein sequence ID" value="AAU15928.1"/>
    <property type="molecule type" value="Genomic_DNA"/>
</dbReference>
<dbReference type="RefSeq" id="WP_000821163.1">
    <property type="nucleotide sequence ID" value="NZ_CP009968.1"/>
</dbReference>
<dbReference type="SMR" id="Q633J8"/>
<dbReference type="GeneID" id="93006511"/>
<dbReference type="KEGG" id="bcz:BCE33L4340"/>
<dbReference type="PATRIC" id="fig|288681.22.peg.1032"/>
<dbReference type="UniPathway" id="UPA00109">
    <property type="reaction ID" value="UER00182"/>
</dbReference>
<dbReference type="Proteomes" id="UP000002612">
    <property type="component" value="Chromosome"/>
</dbReference>
<dbReference type="GO" id="GO:0005945">
    <property type="term" value="C:6-phosphofructokinase complex"/>
    <property type="evidence" value="ECO:0007669"/>
    <property type="project" value="TreeGrafter"/>
</dbReference>
<dbReference type="GO" id="GO:0003872">
    <property type="term" value="F:6-phosphofructokinase activity"/>
    <property type="evidence" value="ECO:0007669"/>
    <property type="project" value="UniProtKB-UniRule"/>
</dbReference>
<dbReference type="GO" id="GO:0016208">
    <property type="term" value="F:AMP binding"/>
    <property type="evidence" value="ECO:0007669"/>
    <property type="project" value="TreeGrafter"/>
</dbReference>
<dbReference type="GO" id="GO:0005524">
    <property type="term" value="F:ATP binding"/>
    <property type="evidence" value="ECO:0007669"/>
    <property type="project" value="UniProtKB-KW"/>
</dbReference>
<dbReference type="GO" id="GO:0070095">
    <property type="term" value="F:fructose-6-phosphate binding"/>
    <property type="evidence" value="ECO:0007669"/>
    <property type="project" value="TreeGrafter"/>
</dbReference>
<dbReference type="GO" id="GO:0042802">
    <property type="term" value="F:identical protein binding"/>
    <property type="evidence" value="ECO:0007669"/>
    <property type="project" value="TreeGrafter"/>
</dbReference>
<dbReference type="GO" id="GO:0046872">
    <property type="term" value="F:metal ion binding"/>
    <property type="evidence" value="ECO:0007669"/>
    <property type="project" value="UniProtKB-KW"/>
</dbReference>
<dbReference type="GO" id="GO:0048029">
    <property type="term" value="F:monosaccharide binding"/>
    <property type="evidence" value="ECO:0007669"/>
    <property type="project" value="TreeGrafter"/>
</dbReference>
<dbReference type="GO" id="GO:0061621">
    <property type="term" value="P:canonical glycolysis"/>
    <property type="evidence" value="ECO:0007669"/>
    <property type="project" value="TreeGrafter"/>
</dbReference>
<dbReference type="GO" id="GO:0030388">
    <property type="term" value="P:fructose 1,6-bisphosphate metabolic process"/>
    <property type="evidence" value="ECO:0007669"/>
    <property type="project" value="TreeGrafter"/>
</dbReference>
<dbReference type="GO" id="GO:0006002">
    <property type="term" value="P:fructose 6-phosphate metabolic process"/>
    <property type="evidence" value="ECO:0007669"/>
    <property type="project" value="InterPro"/>
</dbReference>
<dbReference type="CDD" id="cd00763">
    <property type="entry name" value="Bacterial_PFK"/>
    <property type="match status" value="1"/>
</dbReference>
<dbReference type="FunFam" id="3.40.50.450:FF:000001">
    <property type="entry name" value="ATP-dependent 6-phosphofructokinase"/>
    <property type="match status" value="1"/>
</dbReference>
<dbReference type="FunFam" id="3.40.50.460:FF:000002">
    <property type="entry name" value="ATP-dependent 6-phosphofructokinase"/>
    <property type="match status" value="1"/>
</dbReference>
<dbReference type="Gene3D" id="3.40.50.450">
    <property type="match status" value="1"/>
</dbReference>
<dbReference type="Gene3D" id="3.40.50.460">
    <property type="entry name" value="Phosphofructokinase domain"/>
    <property type="match status" value="1"/>
</dbReference>
<dbReference type="HAMAP" id="MF_00339">
    <property type="entry name" value="Phosphofructokinase_I_B1"/>
    <property type="match status" value="1"/>
</dbReference>
<dbReference type="InterPro" id="IPR022953">
    <property type="entry name" value="ATP_PFK"/>
</dbReference>
<dbReference type="InterPro" id="IPR012003">
    <property type="entry name" value="ATP_PFK_prok-type"/>
</dbReference>
<dbReference type="InterPro" id="IPR012828">
    <property type="entry name" value="PFKA_ATP_prok"/>
</dbReference>
<dbReference type="InterPro" id="IPR015912">
    <property type="entry name" value="Phosphofructokinase_CS"/>
</dbReference>
<dbReference type="InterPro" id="IPR000023">
    <property type="entry name" value="Phosphofructokinase_dom"/>
</dbReference>
<dbReference type="InterPro" id="IPR035966">
    <property type="entry name" value="PKF_sf"/>
</dbReference>
<dbReference type="NCBIfam" id="TIGR02482">
    <property type="entry name" value="PFKA_ATP"/>
    <property type="match status" value="1"/>
</dbReference>
<dbReference type="NCBIfam" id="NF002872">
    <property type="entry name" value="PRK03202.1"/>
    <property type="match status" value="1"/>
</dbReference>
<dbReference type="PANTHER" id="PTHR13697:SF4">
    <property type="entry name" value="ATP-DEPENDENT 6-PHOSPHOFRUCTOKINASE"/>
    <property type="match status" value="1"/>
</dbReference>
<dbReference type="PANTHER" id="PTHR13697">
    <property type="entry name" value="PHOSPHOFRUCTOKINASE"/>
    <property type="match status" value="1"/>
</dbReference>
<dbReference type="Pfam" id="PF00365">
    <property type="entry name" value="PFK"/>
    <property type="match status" value="1"/>
</dbReference>
<dbReference type="PIRSF" id="PIRSF000532">
    <property type="entry name" value="ATP_PFK_prok"/>
    <property type="match status" value="1"/>
</dbReference>
<dbReference type="PRINTS" id="PR00476">
    <property type="entry name" value="PHFRCTKINASE"/>
</dbReference>
<dbReference type="SUPFAM" id="SSF53784">
    <property type="entry name" value="Phosphofructokinase"/>
    <property type="match status" value="1"/>
</dbReference>
<dbReference type="PROSITE" id="PS00433">
    <property type="entry name" value="PHOSPHOFRUCTOKINASE"/>
    <property type="match status" value="1"/>
</dbReference>
<proteinExistence type="inferred from homology"/>
<name>PFKA_BACCZ</name>
<reference key="1">
    <citation type="journal article" date="2006" name="J. Bacteriol.">
        <title>Pathogenomic sequence analysis of Bacillus cereus and Bacillus thuringiensis isolates closely related to Bacillus anthracis.</title>
        <authorList>
            <person name="Han C.S."/>
            <person name="Xie G."/>
            <person name="Challacombe J.F."/>
            <person name="Altherr M.R."/>
            <person name="Bhotika S.S."/>
            <person name="Bruce D."/>
            <person name="Campbell C.S."/>
            <person name="Campbell M.L."/>
            <person name="Chen J."/>
            <person name="Chertkov O."/>
            <person name="Cleland C."/>
            <person name="Dimitrijevic M."/>
            <person name="Doggett N.A."/>
            <person name="Fawcett J.J."/>
            <person name="Glavina T."/>
            <person name="Goodwin L.A."/>
            <person name="Hill K.K."/>
            <person name="Hitchcock P."/>
            <person name="Jackson P.J."/>
            <person name="Keim P."/>
            <person name="Kewalramani A.R."/>
            <person name="Longmire J."/>
            <person name="Lucas S."/>
            <person name="Malfatti S."/>
            <person name="McMurry K."/>
            <person name="Meincke L.J."/>
            <person name="Misra M."/>
            <person name="Moseman B.L."/>
            <person name="Mundt M."/>
            <person name="Munk A.C."/>
            <person name="Okinaka R.T."/>
            <person name="Parson-Quintana B."/>
            <person name="Reilly L.P."/>
            <person name="Richardson P."/>
            <person name="Robinson D.L."/>
            <person name="Rubin E."/>
            <person name="Saunders E."/>
            <person name="Tapia R."/>
            <person name="Tesmer J.G."/>
            <person name="Thayer N."/>
            <person name="Thompson L.S."/>
            <person name="Tice H."/>
            <person name="Ticknor L.O."/>
            <person name="Wills P.L."/>
            <person name="Brettin T.S."/>
            <person name="Gilna P."/>
        </authorList>
    </citation>
    <scope>NUCLEOTIDE SEQUENCE [LARGE SCALE GENOMIC DNA]</scope>
    <source>
        <strain>ZK / E33L</strain>
    </source>
</reference>
<protein>
    <recommendedName>
        <fullName evidence="1">ATP-dependent 6-phosphofructokinase</fullName>
        <shortName evidence="1">ATP-PFK</shortName>
        <shortName evidence="1">Phosphofructokinase</shortName>
        <ecNumber evidence="1">2.7.1.11</ecNumber>
    </recommendedName>
    <alternativeName>
        <fullName evidence="1">Phosphohexokinase</fullName>
    </alternativeName>
</protein>
<comment type="function">
    <text evidence="1">Catalyzes the phosphorylation of D-fructose 6-phosphate to fructose 1,6-bisphosphate by ATP, the first committing step of glycolysis.</text>
</comment>
<comment type="catalytic activity">
    <reaction evidence="1">
        <text>beta-D-fructose 6-phosphate + ATP = beta-D-fructose 1,6-bisphosphate + ADP + H(+)</text>
        <dbReference type="Rhea" id="RHEA:16109"/>
        <dbReference type="ChEBI" id="CHEBI:15378"/>
        <dbReference type="ChEBI" id="CHEBI:30616"/>
        <dbReference type="ChEBI" id="CHEBI:32966"/>
        <dbReference type="ChEBI" id="CHEBI:57634"/>
        <dbReference type="ChEBI" id="CHEBI:456216"/>
        <dbReference type="EC" id="2.7.1.11"/>
    </reaction>
</comment>
<comment type="cofactor">
    <cofactor evidence="1">
        <name>Mg(2+)</name>
        <dbReference type="ChEBI" id="CHEBI:18420"/>
    </cofactor>
</comment>
<comment type="activity regulation">
    <text evidence="1">Allosterically activated by ADP and other diphosphonucleosides, and allosterically inhibited by phosphoenolpyruvate.</text>
</comment>
<comment type="pathway">
    <text evidence="1">Carbohydrate degradation; glycolysis; D-glyceraldehyde 3-phosphate and glycerone phosphate from D-glucose: step 3/4.</text>
</comment>
<comment type="subunit">
    <text evidence="1">Homotetramer.</text>
</comment>
<comment type="subcellular location">
    <subcellularLocation>
        <location evidence="1">Cytoplasm</location>
    </subcellularLocation>
</comment>
<comment type="similarity">
    <text evidence="1">Belongs to the phosphofructokinase type A (PFKA) family. ATP-dependent PFK group I subfamily. Prokaryotic clade 'B1' sub-subfamily.</text>
</comment>
<organism>
    <name type="scientific">Bacillus cereus (strain ZK / E33L)</name>
    <dbReference type="NCBI Taxonomy" id="288681"/>
    <lineage>
        <taxon>Bacteria</taxon>
        <taxon>Bacillati</taxon>
        <taxon>Bacillota</taxon>
        <taxon>Bacilli</taxon>
        <taxon>Bacillales</taxon>
        <taxon>Bacillaceae</taxon>
        <taxon>Bacillus</taxon>
        <taxon>Bacillus cereus group</taxon>
    </lineage>
</organism>
<feature type="chain" id="PRO_1000059742" description="ATP-dependent 6-phosphofructokinase">
    <location>
        <begin position="1"/>
        <end position="319"/>
    </location>
</feature>
<feature type="active site" description="Proton acceptor" evidence="1">
    <location>
        <position position="127"/>
    </location>
</feature>
<feature type="binding site" evidence="1">
    <location>
        <position position="11"/>
    </location>
    <ligand>
        <name>ATP</name>
        <dbReference type="ChEBI" id="CHEBI:30616"/>
    </ligand>
</feature>
<feature type="binding site" evidence="1">
    <location>
        <begin position="21"/>
        <end position="25"/>
    </location>
    <ligand>
        <name>ADP</name>
        <dbReference type="ChEBI" id="CHEBI:456216"/>
        <note>allosteric activator; ligand shared between dimeric partners</note>
    </ligand>
</feature>
<feature type="binding site" evidence="1">
    <location>
        <begin position="72"/>
        <end position="73"/>
    </location>
    <ligand>
        <name>ATP</name>
        <dbReference type="ChEBI" id="CHEBI:30616"/>
    </ligand>
</feature>
<feature type="binding site" evidence="1">
    <location>
        <begin position="102"/>
        <end position="105"/>
    </location>
    <ligand>
        <name>ATP</name>
        <dbReference type="ChEBI" id="CHEBI:30616"/>
    </ligand>
</feature>
<feature type="binding site" evidence="1">
    <location>
        <position position="103"/>
    </location>
    <ligand>
        <name>Mg(2+)</name>
        <dbReference type="ChEBI" id="CHEBI:18420"/>
        <note>catalytic</note>
    </ligand>
</feature>
<feature type="binding site" description="in other chain" evidence="1">
    <location>
        <begin position="125"/>
        <end position="127"/>
    </location>
    <ligand>
        <name>substrate</name>
        <note>ligand shared between dimeric partners</note>
    </ligand>
</feature>
<feature type="binding site" description="in other chain" evidence="1">
    <location>
        <position position="154"/>
    </location>
    <ligand>
        <name>ADP</name>
        <dbReference type="ChEBI" id="CHEBI:456216"/>
        <note>allosteric activator; ligand shared between dimeric partners</note>
    </ligand>
</feature>
<feature type="binding site" evidence="1">
    <location>
        <position position="162"/>
    </location>
    <ligand>
        <name>substrate</name>
        <note>ligand shared between dimeric partners</note>
    </ligand>
</feature>
<feature type="binding site" description="in other chain" evidence="1">
    <location>
        <begin position="169"/>
        <end position="171"/>
    </location>
    <ligand>
        <name>substrate</name>
        <note>ligand shared between dimeric partners</note>
    </ligand>
</feature>
<feature type="binding site" description="in other chain" evidence="1">
    <location>
        <begin position="185"/>
        <end position="187"/>
    </location>
    <ligand>
        <name>ADP</name>
        <dbReference type="ChEBI" id="CHEBI:456216"/>
        <note>allosteric activator; ligand shared between dimeric partners</note>
    </ligand>
</feature>
<feature type="binding site" description="in other chain" evidence="1">
    <location>
        <position position="211"/>
    </location>
    <ligand>
        <name>ADP</name>
        <dbReference type="ChEBI" id="CHEBI:456216"/>
        <note>allosteric activator; ligand shared between dimeric partners</note>
    </ligand>
</feature>
<feature type="binding site" description="in other chain" evidence="1">
    <location>
        <begin position="213"/>
        <end position="215"/>
    </location>
    <ligand>
        <name>ADP</name>
        <dbReference type="ChEBI" id="CHEBI:456216"/>
        <note>allosteric activator; ligand shared between dimeric partners</note>
    </ligand>
</feature>
<feature type="binding site" description="in other chain" evidence="1">
    <location>
        <position position="222"/>
    </location>
    <ligand>
        <name>substrate</name>
        <note>ligand shared between dimeric partners</note>
    </ligand>
</feature>
<feature type="binding site" evidence="1">
    <location>
        <position position="243"/>
    </location>
    <ligand>
        <name>substrate</name>
        <note>ligand shared between dimeric partners</note>
    </ligand>
</feature>
<feature type="binding site" description="in other chain" evidence="1">
    <location>
        <begin position="249"/>
        <end position="252"/>
    </location>
    <ligand>
        <name>substrate</name>
        <note>ligand shared between dimeric partners</note>
    </ligand>
</feature>
<evidence type="ECO:0000255" key="1">
    <source>
        <dbReference type="HAMAP-Rule" id="MF_00339"/>
    </source>
</evidence>
<sequence length="319" mass="34308">MKRIGVLTSGGDSPGMNAAIRAVVRKAIFHDIEVYGIYHGYAGLISGHIEKLELGSVGDIIHRGGTKLYTARCPEFKDPEVRLKGIEQLKKHGIEGLVVIGGDGSYQGAKKLTEQGFPCVGVPGTIDNDIPGTDFTIGFDTALNTVIDAIDKIRDTATSHERTYVIEVMGRHAGDIALWAGLADGAETILIPEEEYDMEDVIARLKRGSERGKKHSIIVVAEGVGSAIDIGKHIEEATNFDTRVTVLGHVQRGGSPSAQDRVLASRLGARAVELLIAGKGGRCVGIQDNKLVDHDIIEALAQKHTIDKDMYQLSKELSI</sequence>
<gene>
    <name evidence="1" type="primary">pfkA</name>
    <name type="ordered locus">BCE33L4340</name>
</gene>
<accession>Q633J8</accession>